<reference key="1">
    <citation type="journal article" date="2006" name="PLoS Biol.">
        <title>Metabolic complementarity and genomics of the dual bacterial symbiosis of sharpshooters.</title>
        <authorList>
            <person name="Wu D."/>
            <person name="Daugherty S.C."/>
            <person name="Van Aken S.E."/>
            <person name="Pai G.H."/>
            <person name="Watkins K.L."/>
            <person name="Khouri H."/>
            <person name="Tallon L.J."/>
            <person name="Zaborsky J.M."/>
            <person name="Dunbar H.E."/>
            <person name="Tran P.L."/>
            <person name="Moran N.A."/>
            <person name="Eisen J.A."/>
        </authorList>
    </citation>
    <scope>NUCLEOTIDE SEQUENCE [LARGE SCALE GENOMIC DNA]</scope>
</reference>
<evidence type="ECO:0000255" key="1">
    <source>
        <dbReference type="HAMAP-Rule" id="MF_00086"/>
    </source>
</evidence>
<sequence length="385" mass="42138">MAKHLFTSESVSEGHPDKIADQISDTVLDAILAQDLKARVACETYVKTGMVLVGGEITTNAWIDIEELTRNTIRDIGYTNSEMKFDANSCAVLSIISKQSPDINKGINNIDPREQGAGDQGFMFGYATNETDVLMPAPITYAHRLVARQSLVRKNGTLPWLCPDAKSQVTFAYDEGKVVGIDTVVFSTQHVENITLPNLKEAVMEEIIKPVLPIELLSEHTKFFINPTGRFVVGGPMGDCGLTGRKIIVDTYGGMARHGGGAFSGKDPSKVDRSAAYAARYVAKNIVAAGLAEKCEIQVSYAIGIAEPTSITIETFGTEKISADHLTALVNEFFDLRPYSLITMLNLLQPIYRETATYGHFGREHFPWEKTDKAILLRDAASXIC</sequence>
<organism>
    <name type="scientific">Baumannia cicadellinicola subsp. Homalodisca coagulata</name>
    <dbReference type="NCBI Taxonomy" id="374463"/>
    <lineage>
        <taxon>Bacteria</taxon>
        <taxon>Pseudomonadati</taxon>
        <taxon>Pseudomonadota</taxon>
        <taxon>Gammaproteobacteria</taxon>
        <taxon>Candidatus Palibaumannia</taxon>
    </lineage>
</organism>
<protein>
    <recommendedName>
        <fullName evidence="1">S-adenosylmethionine synthase</fullName>
        <shortName evidence="1">AdoMet synthase</shortName>
        <ecNumber evidence="1">2.5.1.6</ecNumber>
    </recommendedName>
    <alternativeName>
        <fullName evidence="1">MAT</fullName>
    </alternativeName>
    <alternativeName>
        <fullName evidence="1">Methionine adenosyltransferase</fullName>
    </alternativeName>
</protein>
<comment type="function">
    <text evidence="1">Catalyzes the formation of S-adenosylmethionine (AdoMet) from methionine and ATP. The overall synthetic reaction is composed of two sequential steps, AdoMet formation and the subsequent tripolyphosphate hydrolysis which occurs prior to release of AdoMet from the enzyme.</text>
</comment>
<comment type="catalytic activity">
    <reaction evidence="1">
        <text>L-methionine + ATP + H2O = S-adenosyl-L-methionine + phosphate + diphosphate</text>
        <dbReference type="Rhea" id="RHEA:21080"/>
        <dbReference type="ChEBI" id="CHEBI:15377"/>
        <dbReference type="ChEBI" id="CHEBI:30616"/>
        <dbReference type="ChEBI" id="CHEBI:33019"/>
        <dbReference type="ChEBI" id="CHEBI:43474"/>
        <dbReference type="ChEBI" id="CHEBI:57844"/>
        <dbReference type="ChEBI" id="CHEBI:59789"/>
        <dbReference type="EC" id="2.5.1.6"/>
    </reaction>
</comment>
<comment type="cofactor">
    <cofactor evidence="1">
        <name>Mg(2+)</name>
        <dbReference type="ChEBI" id="CHEBI:18420"/>
    </cofactor>
    <text evidence="1">Binds 2 divalent ions per subunit.</text>
</comment>
<comment type="cofactor">
    <cofactor evidence="1">
        <name>K(+)</name>
        <dbReference type="ChEBI" id="CHEBI:29103"/>
    </cofactor>
    <text evidence="1">Binds 1 potassium ion per subunit.</text>
</comment>
<comment type="pathway">
    <text evidence="1">Amino-acid biosynthesis; S-adenosyl-L-methionine biosynthesis; S-adenosyl-L-methionine from L-methionine: step 1/1.</text>
</comment>
<comment type="subunit">
    <text evidence="1">Homotetramer; dimer of dimers.</text>
</comment>
<comment type="subcellular location">
    <subcellularLocation>
        <location evidence="1">Cytoplasm</location>
    </subcellularLocation>
</comment>
<comment type="similarity">
    <text evidence="1">Belongs to the AdoMet synthase family.</text>
</comment>
<gene>
    <name evidence="1" type="primary">metK</name>
    <name type="ordered locus">BCI_0015</name>
</gene>
<feature type="chain" id="PRO_0000302895" description="S-adenosylmethionine synthase">
    <location>
        <begin position="1"/>
        <end position="385"/>
    </location>
</feature>
<feature type="region of interest" description="Flexible loop" evidence="1">
    <location>
        <begin position="99"/>
        <end position="109"/>
    </location>
</feature>
<feature type="binding site" description="in other chain" evidence="1">
    <location>
        <position position="15"/>
    </location>
    <ligand>
        <name>ATP</name>
        <dbReference type="ChEBI" id="CHEBI:30616"/>
        <note>ligand shared between two neighboring subunits</note>
    </ligand>
</feature>
<feature type="binding site" evidence="1">
    <location>
        <position position="17"/>
    </location>
    <ligand>
        <name>Mg(2+)</name>
        <dbReference type="ChEBI" id="CHEBI:18420"/>
    </ligand>
</feature>
<feature type="binding site" evidence="1">
    <location>
        <position position="43"/>
    </location>
    <ligand>
        <name>K(+)</name>
        <dbReference type="ChEBI" id="CHEBI:29103"/>
    </ligand>
</feature>
<feature type="binding site" description="in other chain" evidence="1">
    <location>
        <position position="56"/>
    </location>
    <ligand>
        <name>L-methionine</name>
        <dbReference type="ChEBI" id="CHEBI:57844"/>
        <note>ligand shared between two neighboring subunits</note>
    </ligand>
</feature>
<feature type="binding site" description="in other chain" evidence="1">
    <location>
        <position position="99"/>
    </location>
    <ligand>
        <name>L-methionine</name>
        <dbReference type="ChEBI" id="CHEBI:57844"/>
        <note>ligand shared between two neighboring subunits</note>
    </ligand>
</feature>
<feature type="binding site" description="in other chain" evidence="1">
    <location>
        <begin position="164"/>
        <end position="166"/>
    </location>
    <ligand>
        <name>ATP</name>
        <dbReference type="ChEBI" id="CHEBI:30616"/>
        <note>ligand shared between two neighboring subunits</note>
    </ligand>
</feature>
<feature type="binding site" description="in other chain" evidence="1">
    <location>
        <begin position="230"/>
        <end position="231"/>
    </location>
    <ligand>
        <name>ATP</name>
        <dbReference type="ChEBI" id="CHEBI:30616"/>
        <note>ligand shared between two neighboring subunits</note>
    </ligand>
</feature>
<feature type="binding site" evidence="1">
    <location>
        <position position="239"/>
    </location>
    <ligand>
        <name>ATP</name>
        <dbReference type="ChEBI" id="CHEBI:30616"/>
        <note>ligand shared between two neighboring subunits</note>
    </ligand>
</feature>
<feature type="binding site" evidence="1">
    <location>
        <position position="239"/>
    </location>
    <ligand>
        <name>L-methionine</name>
        <dbReference type="ChEBI" id="CHEBI:57844"/>
        <note>ligand shared between two neighboring subunits</note>
    </ligand>
</feature>
<feature type="binding site" description="in other chain" evidence="1">
    <location>
        <begin position="245"/>
        <end position="246"/>
    </location>
    <ligand>
        <name>ATP</name>
        <dbReference type="ChEBI" id="CHEBI:30616"/>
        <note>ligand shared between two neighboring subunits</note>
    </ligand>
</feature>
<feature type="binding site" evidence="1">
    <location>
        <position position="262"/>
    </location>
    <ligand>
        <name>ATP</name>
        <dbReference type="ChEBI" id="CHEBI:30616"/>
        <note>ligand shared between two neighboring subunits</note>
    </ligand>
</feature>
<feature type="binding site" evidence="1">
    <location>
        <position position="266"/>
    </location>
    <ligand>
        <name>ATP</name>
        <dbReference type="ChEBI" id="CHEBI:30616"/>
        <note>ligand shared between two neighboring subunits</note>
    </ligand>
</feature>
<feature type="binding site" description="in other chain" evidence="1">
    <location>
        <position position="270"/>
    </location>
    <ligand>
        <name>L-methionine</name>
        <dbReference type="ChEBI" id="CHEBI:57844"/>
        <note>ligand shared between two neighboring subunits</note>
    </ligand>
</feature>
<keyword id="KW-0067">ATP-binding</keyword>
<keyword id="KW-0963">Cytoplasm</keyword>
<keyword id="KW-0460">Magnesium</keyword>
<keyword id="KW-0479">Metal-binding</keyword>
<keyword id="KW-0547">Nucleotide-binding</keyword>
<keyword id="KW-0554">One-carbon metabolism</keyword>
<keyword id="KW-0630">Potassium</keyword>
<keyword id="KW-1185">Reference proteome</keyword>
<keyword id="KW-0808">Transferase</keyword>
<dbReference type="EC" id="2.5.1.6" evidence="1"/>
<dbReference type="EMBL" id="CP000238">
    <property type="protein sequence ID" value="ABF14233.1"/>
    <property type="molecule type" value="Genomic_DNA"/>
</dbReference>
<dbReference type="RefSeq" id="WP_011520227.1">
    <property type="nucleotide sequence ID" value="NC_007984.1"/>
</dbReference>
<dbReference type="STRING" id="374463.BCI_0015"/>
<dbReference type="KEGG" id="bci:BCI_0015"/>
<dbReference type="HOGENOM" id="CLU_041802_1_1_6"/>
<dbReference type="OrthoDB" id="9801686at2"/>
<dbReference type="UniPathway" id="UPA00315">
    <property type="reaction ID" value="UER00080"/>
</dbReference>
<dbReference type="Proteomes" id="UP000002427">
    <property type="component" value="Chromosome"/>
</dbReference>
<dbReference type="GO" id="GO:0005737">
    <property type="term" value="C:cytoplasm"/>
    <property type="evidence" value="ECO:0007669"/>
    <property type="project" value="UniProtKB-SubCell"/>
</dbReference>
<dbReference type="GO" id="GO:0005524">
    <property type="term" value="F:ATP binding"/>
    <property type="evidence" value="ECO:0007669"/>
    <property type="project" value="UniProtKB-UniRule"/>
</dbReference>
<dbReference type="GO" id="GO:0000287">
    <property type="term" value="F:magnesium ion binding"/>
    <property type="evidence" value="ECO:0007669"/>
    <property type="project" value="UniProtKB-UniRule"/>
</dbReference>
<dbReference type="GO" id="GO:0004478">
    <property type="term" value="F:methionine adenosyltransferase activity"/>
    <property type="evidence" value="ECO:0007669"/>
    <property type="project" value="UniProtKB-UniRule"/>
</dbReference>
<dbReference type="GO" id="GO:0006730">
    <property type="term" value="P:one-carbon metabolic process"/>
    <property type="evidence" value="ECO:0007669"/>
    <property type="project" value="UniProtKB-KW"/>
</dbReference>
<dbReference type="GO" id="GO:0006556">
    <property type="term" value="P:S-adenosylmethionine biosynthetic process"/>
    <property type="evidence" value="ECO:0007669"/>
    <property type="project" value="UniProtKB-UniRule"/>
</dbReference>
<dbReference type="CDD" id="cd18079">
    <property type="entry name" value="S-AdoMet_synt"/>
    <property type="match status" value="1"/>
</dbReference>
<dbReference type="FunFam" id="3.30.300.10:FF:000003">
    <property type="entry name" value="S-adenosylmethionine synthase"/>
    <property type="match status" value="1"/>
</dbReference>
<dbReference type="Gene3D" id="3.30.300.10">
    <property type="match status" value="3"/>
</dbReference>
<dbReference type="HAMAP" id="MF_00086">
    <property type="entry name" value="S_AdoMet_synth1"/>
    <property type="match status" value="1"/>
</dbReference>
<dbReference type="InterPro" id="IPR022631">
    <property type="entry name" value="ADOMET_SYNTHASE_CS"/>
</dbReference>
<dbReference type="InterPro" id="IPR022630">
    <property type="entry name" value="S-AdoMet_synt_C"/>
</dbReference>
<dbReference type="InterPro" id="IPR022629">
    <property type="entry name" value="S-AdoMet_synt_central"/>
</dbReference>
<dbReference type="InterPro" id="IPR022628">
    <property type="entry name" value="S-AdoMet_synt_N"/>
</dbReference>
<dbReference type="InterPro" id="IPR002133">
    <property type="entry name" value="S-AdoMet_synthetase"/>
</dbReference>
<dbReference type="InterPro" id="IPR022636">
    <property type="entry name" value="S-AdoMet_synthetase_sfam"/>
</dbReference>
<dbReference type="NCBIfam" id="TIGR01034">
    <property type="entry name" value="metK"/>
    <property type="match status" value="1"/>
</dbReference>
<dbReference type="PANTHER" id="PTHR11964">
    <property type="entry name" value="S-ADENOSYLMETHIONINE SYNTHETASE"/>
    <property type="match status" value="1"/>
</dbReference>
<dbReference type="Pfam" id="PF02773">
    <property type="entry name" value="S-AdoMet_synt_C"/>
    <property type="match status" value="1"/>
</dbReference>
<dbReference type="Pfam" id="PF02772">
    <property type="entry name" value="S-AdoMet_synt_M"/>
    <property type="match status" value="1"/>
</dbReference>
<dbReference type="Pfam" id="PF00438">
    <property type="entry name" value="S-AdoMet_synt_N"/>
    <property type="match status" value="1"/>
</dbReference>
<dbReference type="PIRSF" id="PIRSF000497">
    <property type="entry name" value="MAT"/>
    <property type="match status" value="1"/>
</dbReference>
<dbReference type="SUPFAM" id="SSF55973">
    <property type="entry name" value="S-adenosylmethionine synthetase"/>
    <property type="match status" value="3"/>
</dbReference>
<dbReference type="PROSITE" id="PS00376">
    <property type="entry name" value="ADOMET_SYNTHASE_1"/>
    <property type="match status" value="1"/>
</dbReference>
<dbReference type="PROSITE" id="PS00377">
    <property type="entry name" value="ADOMET_SYNTHASE_2"/>
    <property type="match status" value="1"/>
</dbReference>
<name>METK_BAUCH</name>
<proteinExistence type="inferred from homology"/>
<accession>Q1LU70</accession>